<feature type="chain" id="PRO_0000109063" description="UDP-N-acetylmuramoylalanine--D-glutamate ligase">
    <location>
        <begin position="1"/>
        <end position="448"/>
    </location>
</feature>
<feature type="binding site" evidence="1">
    <location>
        <begin position="116"/>
        <end position="122"/>
    </location>
    <ligand>
        <name>ATP</name>
        <dbReference type="ChEBI" id="CHEBI:30616"/>
    </ligand>
</feature>
<keyword id="KW-0067">ATP-binding</keyword>
<keyword id="KW-0131">Cell cycle</keyword>
<keyword id="KW-0132">Cell division</keyword>
<keyword id="KW-0133">Cell shape</keyword>
<keyword id="KW-0961">Cell wall biogenesis/degradation</keyword>
<keyword id="KW-0963">Cytoplasm</keyword>
<keyword id="KW-0436">Ligase</keyword>
<keyword id="KW-0547">Nucleotide-binding</keyword>
<keyword id="KW-0573">Peptidoglycan synthesis</keyword>
<dbReference type="EC" id="6.3.2.9" evidence="1"/>
<dbReference type="EMBL" id="CP000076">
    <property type="protein sequence ID" value="AAY94291.1"/>
    <property type="molecule type" value="Genomic_DNA"/>
</dbReference>
<dbReference type="RefSeq" id="WP_011063312.1">
    <property type="nucleotide sequence ID" value="NC_004129.6"/>
</dbReference>
<dbReference type="SMR" id="Q4K6J1"/>
<dbReference type="STRING" id="220664.PFL_5063"/>
<dbReference type="KEGG" id="pfl:PFL_5063"/>
<dbReference type="PATRIC" id="fig|220664.5.peg.5181"/>
<dbReference type="eggNOG" id="COG0771">
    <property type="taxonomic scope" value="Bacteria"/>
</dbReference>
<dbReference type="HOGENOM" id="CLU_032540_1_0_6"/>
<dbReference type="UniPathway" id="UPA00219"/>
<dbReference type="Proteomes" id="UP000008540">
    <property type="component" value="Chromosome"/>
</dbReference>
<dbReference type="GO" id="GO:0005737">
    <property type="term" value="C:cytoplasm"/>
    <property type="evidence" value="ECO:0007669"/>
    <property type="project" value="UniProtKB-SubCell"/>
</dbReference>
<dbReference type="GO" id="GO:0005524">
    <property type="term" value="F:ATP binding"/>
    <property type="evidence" value="ECO:0007669"/>
    <property type="project" value="UniProtKB-UniRule"/>
</dbReference>
<dbReference type="GO" id="GO:0008764">
    <property type="term" value="F:UDP-N-acetylmuramoylalanine-D-glutamate ligase activity"/>
    <property type="evidence" value="ECO:0007669"/>
    <property type="project" value="UniProtKB-UniRule"/>
</dbReference>
<dbReference type="GO" id="GO:0051301">
    <property type="term" value="P:cell division"/>
    <property type="evidence" value="ECO:0007669"/>
    <property type="project" value="UniProtKB-KW"/>
</dbReference>
<dbReference type="GO" id="GO:0071555">
    <property type="term" value="P:cell wall organization"/>
    <property type="evidence" value="ECO:0007669"/>
    <property type="project" value="UniProtKB-KW"/>
</dbReference>
<dbReference type="GO" id="GO:0009252">
    <property type="term" value="P:peptidoglycan biosynthetic process"/>
    <property type="evidence" value="ECO:0007669"/>
    <property type="project" value="UniProtKB-UniRule"/>
</dbReference>
<dbReference type="GO" id="GO:0008360">
    <property type="term" value="P:regulation of cell shape"/>
    <property type="evidence" value="ECO:0007669"/>
    <property type="project" value="UniProtKB-KW"/>
</dbReference>
<dbReference type="Gene3D" id="3.90.190.20">
    <property type="entry name" value="Mur ligase, C-terminal domain"/>
    <property type="match status" value="1"/>
</dbReference>
<dbReference type="Gene3D" id="3.40.1190.10">
    <property type="entry name" value="Mur-like, catalytic domain"/>
    <property type="match status" value="1"/>
</dbReference>
<dbReference type="Gene3D" id="3.40.50.720">
    <property type="entry name" value="NAD(P)-binding Rossmann-like Domain"/>
    <property type="match status" value="1"/>
</dbReference>
<dbReference type="HAMAP" id="MF_00639">
    <property type="entry name" value="MurD"/>
    <property type="match status" value="1"/>
</dbReference>
<dbReference type="InterPro" id="IPR036565">
    <property type="entry name" value="Mur-like_cat_sf"/>
</dbReference>
<dbReference type="InterPro" id="IPR004101">
    <property type="entry name" value="Mur_ligase_C"/>
</dbReference>
<dbReference type="InterPro" id="IPR036615">
    <property type="entry name" value="Mur_ligase_C_dom_sf"/>
</dbReference>
<dbReference type="InterPro" id="IPR013221">
    <property type="entry name" value="Mur_ligase_cen"/>
</dbReference>
<dbReference type="InterPro" id="IPR005762">
    <property type="entry name" value="MurD"/>
</dbReference>
<dbReference type="NCBIfam" id="TIGR01087">
    <property type="entry name" value="murD"/>
    <property type="match status" value="1"/>
</dbReference>
<dbReference type="PANTHER" id="PTHR43692">
    <property type="entry name" value="UDP-N-ACETYLMURAMOYLALANINE--D-GLUTAMATE LIGASE"/>
    <property type="match status" value="1"/>
</dbReference>
<dbReference type="PANTHER" id="PTHR43692:SF1">
    <property type="entry name" value="UDP-N-ACETYLMURAMOYLALANINE--D-GLUTAMATE LIGASE"/>
    <property type="match status" value="1"/>
</dbReference>
<dbReference type="Pfam" id="PF02875">
    <property type="entry name" value="Mur_ligase_C"/>
    <property type="match status" value="1"/>
</dbReference>
<dbReference type="Pfam" id="PF08245">
    <property type="entry name" value="Mur_ligase_M"/>
    <property type="match status" value="1"/>
</dbReference>
<dbReference type="Pfam" id="PF21799">
    <property type="entry name" value="MurD-like_N"/>
    <property type="match status" value="1"/>
</dbReference>
<dbReference type="SUPFAM" id="SSF51984">
    <property type="entry name" value="MurCD N-terminal domain"/>
    <property type="match status" value="1"/>
</dbReference>
<dbReference type="SUPFAM" id="SSF53623">
    <property type="entry name" value="MurD-like peptide ligases, catalytic domain"/>
    <property type="match status" value="1"/>
</dbReference>
<dbReference type="SUPFAM" id="SSF53244">
    <property type="entry name" value="MurD-like peptide ligases, peptide-binding domain"/>
    <property type="match status" value="1"/>
</dbReference>
<proteinExistence type="inferred from homology"/>
<accession>Q4K6J1</accession>
<evidence type="ECO:0000255" key="1">
    <source>
        <dbReference type="HAMAP-Rule" id="MF_00639"/>
    </source>
</evidence>
<organism>
    <name type="scientific">Pseudomonas fluorescens (strain ATCC BAA-477 / NRRL B-23932 / Pf-5)</name>
    <dbReference type="NCBI Taxonomy" id="220664"/>
    <lineage>
        <taxon>Bacteria</taxon>
        <taxon>Pseudomonadati</taxon>
        <taxon>Pseudomonadota</taxon>
        <taxon>Gammaproteobacteria</taxon>
        <taxon>Pseudomonadales</taxon>
        <taxon>Pseudomonadaceae</taxon>
        <taxon>Pseudomonas</taxon>
    </lineage>
</organism>
<gene>
    <name evidence="1" type="primary">murD</name>
    <name type="ordered locus">PFL_5063</name>
</gene>
<reference key="1">
    <citation type="journal article" date="2005" name="Nat. Biotechnol.">
        <title>Complete genome sequence of the plant commensal Pseudomonas fluorescens Pf-5.</title>
        <authorList>
            <person name="Paulsen I.T."/>
            <person name="Press C.M."/>
            <person name="Ravel J."/>
            <person name="Kobayashi D.Y."/>
            <person name="Myers G.S.A."/>
            <person name="Mavrodi D.V."/>
            <person name="DeBoy R.T."/>
            <person name="Seshadri R."/>
            <person name="Ren Q."/>
            <person name="Madupu R."/>
            <person name="Dodson R.J."/>
            <person name="Durkin A.S."/>
            <person name="Brinkac L.M."/>
            <person name="Daugherty S.C."/>
            <person name="Sullivan S.A."/>
            <person name="Rosovitz M.J."/>
            <person name="Gwinn M.L."/>
            <person name="Zhou L."/>
            <person name="Schneider D.J."/>
            <person name="Cartinhour S.W."/>
            <person name="Nelson W.C."/>
            <person name="Weidman J."/>
            <person name="Watkins K."/>
            <person name="Tran K."/>
            <person name="Khouri H."/>
            <person name="Pierson E.A."/>
            <person name="Pierson L.S. III"/>
            <person name="Thomashow L.S."/>
            <person name="Loper J.E."/>
        </authorList>
    </citation>
    <scope>NUCLEOTIDE SEQUENCE [LARGE SCALE GENOMIC DNA]</scope>
    <source>
        <strain>ATCC BAA-477 / NRRL B-23932 / Pf-5</strain>
    </source>
</reference>
<protein>
    <recommendedName>
        <fullName evidence="1">UDP-N-acetylmuramoylalanine--D-glutamate ligase</fullName>
        <ecNumber evidence="1">6.3.2.9</ecNumber>
    </recommendedName>
    <alternativeName>
        <fullName evidence="1">D-glutamic acid-adding enzyme</fullName>
    </alternativeName>
    <alternativeName>
        <fullName evidence="1">UDP-N-acetylmuramoyl-L-alanyl-D-glutamate synthetase</fullName>
    </alternativeName>
</protein>
<sequence>MSLIASDHFRIVVGLGKSGMSLVRFLASRGVAFAVADTRENPPELATLRRDYPQVEVRCGELDVDFLCRADELYVSPGLALATPALQAAAARGVKLSGDIELFARNAKAPIVAISGSNAKSTVTTLVGEMAAAAGKRVAVGGNLGTPALDLLSDDVELYVMELSSFQLETTDQLGAEVATVLNISEDHMDRYSGLPAYHLAKHRIFRGARQVVFNRQDALTRPLIGEGLPCWTFGLSKPDFKAFGLREEDGEKYLAFEFQNLMPVRELKIRGAHNQSNALAALALGHAVGLPFDAMLAALRTFAGLEHRCQWVRDLDGVAYYNDSKATNVGAALAAIEGLGADIEGKIVLIAGGDGKGADFKDLRGPVAANCRAVILMGRDSDQIGEAIGDAVPLIRVGSLQEAVEQCRATAQPGDVVLLSPACASFDMFKNYEDRGHQFVRIVEELA</sequence>
<comment type="function">
    <text evidence="1">Cell wall formation. Catalyzes the addition of glutamate to the nucleotide precursor UDP-N-acetylmuramoyl-L-alanine (UMA).</text>
</comment>
<comment type="catalytic activity">
    <reaction evidence="1">
        <text>UDP-N-acetyl-alpha-D-muramoyl-L-alanine + D-glutamate + ATP = UDP-N-acetyl-alpha-D-muramoyl-L-alanyl-D-glutamate + ADP + phosphate + H(+)</text>
        <dbReference type="Rhea" id="RHEA:16429"/>
        <dbReference type="ChEBI" id="CHEBI:15378"/>
        <dbReference type="ChEBI" id="CHEBI:29986"/>
        <dbReference type="ChEBI" id="CHEBI:30616"/>
        <dbReference type="ChEBI" id="CHEBI:43474"/>
        <dbReference type="ChEBI" id="CHEBI:83898"/>
        <dbReference type="ChEBI" id="CHEBI:83900"/>
        <dbReference type="ChEBI" id="CHEBI:456216"/>
        <dbReference type="EC" id="6.3.2.9"/>
    </reaction>
</comment>
<comment type="pathway">
    <text evidence="1">Cell wall biogenesis; peptidoglycan biosynthesis.</text>
</comment>
<comment type="subcellular location">
    <subcellularLocation>
        <location evidence="1">Cytoplasm</location>
    </subcellularLocation>
</comment>
<comment type="similarity">
    <text evidence="1">Belongs to the MurCDEF family.</text>
</comment>
<name>MURD_PSEF5</name>